<proteinExistence type="inferred from homology"/>
<protein>
    <recommendedName>
        <fullName>Probable DNA-directed RNA polymerase subunit delta</fullName>
    </recommendedName>
    <alternativeName>
        <fullName>RNAP delta factor</fullName>
    </alternativeName>
</protein>
<evidence type="ECO:0000250" key="1"/>
<evidence type="ECO:0000255" key="2">
    <source>
        <dbReference type="PROSITE-ProRule" id="PRU01261"/>
    </source>
</evidence>
<evidence type="ECO:0000256" key="3">
    <source>
        <dbReference type="SAM" id="MobiDB-lite"/>
    </source>
</evidence>
<evidence type="ECO:0000305" key="4"/>
<reference key="1">
    <citation type="journal article" date="2000" name="Nature">
        <title>The complete sequence of the mucosal pathogen Ureaplasma urealyticum.</title>
        <authorList>
            <person name="Glass J.I."/>
            <person name="Lefkowitz E.J."/>
            <person name="Glass J.S."/>
            <person name="Heiner C.R."/>
            <person name="Chen E.Y."/>
            <person name="Cassell G.H."/>
        </authorList>
    </citation>
    <scope>NUCLEOTIDE SEQUENCE [LARGE SCALE GENOMIC DNA]</scope>
    <source>
        <strain>ATCC 700970</strain>
    </source>
</reference>
<dbReference type="EMBL" id="AF222894">
    <property type="protein sequence ID" value="AAF31011.1"/>
    <property type="molecule type" value="Genomic_DNA"/>
</dbReference>
<dbReference type="RefSeq" id="WP_006688513.1">
    <property type="nucleotide sequence ID" value="NC_002162.1"/>
</dbReference>
<dbReference type="SMR" id="Q9PPP2"/>
<dbReference type="STRING" id="273119.UU597"/>
<dbReference type="EnsemblBacteria" id="AAF31011">
    <property type="protein sequence ID" value="AAF31011"/>
    <property type="gene ID" value="UU597"/>
</dbReference>
<dbReference type="GeneID" id="29672359"/>
<dbReference type="KEGG" id="uur:UU597"/>
<dbReference type="eggNOG" id="COG3343">
    <property type="taxonomic scope" value="Bacteria"/>
</dbReference>
<dbReference type="HOGENOM" id="CLU_1651434_0_0_14"/>
<dbReference type="OrthoDB" id="400111at2"/>
<dbReference type="Proteomes" id="UP000000423">
    <property type="component" value="Chromosome"/>
</dbReference>
<dbReference type="GO" id="GO:0000428">
    <property type="term" value="C:DNA-directed RNA polymerase complex"/>
    <property type="evidence" value="ECO:0007669"/>
    <property type="project" value="UniProtKB-KW"/>
</dbReference>
<dbReference type="GO" id="GO:0003899">
    <property type="term" value="F:DNA-directed RNA polymerase activity"/>
    <property type="evidence" value="ECO:0007669"/>
    <property type="project" value="UniProtKB-UniRule"/>
</dbReference>
<dbReference type="GO" id="GO:0006351">
    <property type="term" value="P:DNA-templated transcription"/>
    <property type="evidence" value="ECO:0007669"/>
    <property type="project" value="InterPro"/>
</dbReference>
<dbReference type="GO" id="GO:0006355">
    <property type="term" value="P:regulation of DNA-templated transcription"/>
    <property type="evidence" value="ECO:0007669"/>
    <property type="project" value="UniProtKB-UniRule"/>
</dbReference>
<dbReference type="Gene3D" id="1.10.10.1250">
    <property type="entry name" value="RNA polymerase, subunit delta, N-terminal domain"/>
    <property type="match status" value="1"/>
</dbReference>
<dbReference type="HAMAP" id="MF_00357">
    <property type="entry name" value="RNApol_bact_RpoE"/>
    <property type="match status" value="1"/>
</dbReference>
<dbReference type="InterPro" id="IPR007759">
    <property type="entry name" value="Asxl_HARE-HTH"/>
</dbReference>
<dbReference type="InterPro" id="IPR038087">
    <property type="entry name" value="RNAP_delta_N_dom_sf"/>
</dbReference>
<dbReference type="InterPro" id="IPR029757">
    <property type="entry name" value="RpoE"/>
</dbReference>
<dbReference type="NCBIfam" id="TIGR04567">
    <property type="entry name" value="RNAP_delt_lowGC"/>
    <property type="match status" value="1"/>
</dbReference>
<dbReference type="PROSITE" id="PS51913">
    <property type="entry name" value="HTH_HARE"/>
    <property type="match status" value="1"/>
</dbReference>
<organism>
    <name type="scientific">Ureaplasma parvum serovar 3 (strain ATCC 700970)</name>
    <dbReference type="NCBI Taxonomy" id="273119"/>
    <lineage>
        <taxon>Bacteria</taxon>
        <taxon>Bacillati</taxon>
        <taxon>Mycoplasmatota</taxon>
        <taxon>Mycoplasmoidales</taxon>
        <taxon>Mycoplasmoidaceae</taxon>
        <taxon>Ureaplasma</taxon>
    </lineage>
</organism>
<keyword id="KW-0240">DNA-directed RNA polymerase</keyword>
<keyword id="KW-0548">Nucleotidyltransferase</keyword>
<keyword id="KW-1185">Reference proteome</keyword>
<keyword id="KW-0804">Transcription</keyword>
<keyword id="KW-0808">Transferase</keyword>
<name>RPOE_UREPA</name>
<comment type="function">
    <text evidence="1">Participates in both the initiation and recycling phases of transcription. In the presence of the delta subunit, RNAP displays an increased specificity of transcription, a decreased affinity for nucleic acids, and an increased efficiency of RNA synthesis because of enhanced recycling (By similarity).</text>
</comment>
<comment type="subunit">
    <text evidence="1">RNAP is composed of a core of 2 alpha, a beta and a beta' subunits. The core is associated with a delta subunit and one of several sigma factors (By similarity).</text>
</comment>
<comment type="similarity">
    <text evidence="4">Belongs to the RpoE family.</text>
</comment>
<accession>Q9PPP2</accession>
<feature type="chain" id="PRO_0000204335" description="Probable DNA-directed RNA polymerase subunit delta">
    <location>
        <begin position="1"/>
        <end position="160"/>
    </location>
</feature>
<feature type="domain" description="HTH HARE-type" evidence="2">
    <location>
        <begin position="3"/>
        <end position="74"/>
    </location>
</feature>
<feature type="region of interest" description="Disordered" evidence="3">
    <location>
        <begin position="94"/>
        <end position="160"/>
    </location>
</feature>
<feature type="compositionally biased region" description="Basic and acidic residues" evidence="3">
    <location>
        <begin position="104"/>
        <end position="117"/>
    </location>
</feature>
<feature type="compositionally biased region" description="Acidic residues" evidence="3">
    <location>
        <begin position="149"/>
        <end position="160"/>
    </location>
</feature>
<gene>
    <name type="primary">rpoE</name>
    <name type="ordered locus">UU597</name>
</gene>
<sequence>MSRQLVDIAYNAIKNNKIYNKKPFTFDDIINEIVKNSNVNLVEVNSQLGVLYTTLIQDTRFISIGDLEWNLRERLSLDEITKINNAMYEVGLYKDSDREEDEHEIVKNDKLTQSKEQEESDEVSSLSDFVGYEDEDEEFKNNNTSNKDEIEDEEELEEEE</sequence>